<sequence length="207" mass="22106">MASDPPPPYPGGPSAPLLEDKHGAPRMEEPRPAPYPQAMAFAPPDCGPPPYDANPGYIAPNPGFYPPPGPYVPMGYYPPSPSQFQPPYPSQYSSPGAQGTAVILPPGPTSTSGTTTVTSNTTTVTVLHGEIFQGSPVQTVCQHCQQPITTKISHEIGLMNFLLCCFCCFVGCDLGCCLIPCIINDLKDVTHTCPNCKAVIYTYRRMC</sequence>
<accession>Q8AVW3</accession>
<organism>
    <name type="scientific">Xenopus laevis</name>
    <name type="common">African clawed frog</name>
    <dbReference type="NCBI Taxonomy" id="8355"/>
    <lineage>
        <taxon>Eukaryota</taxon>
        <taxon>Metazoa</taxon>
        <taxon>Chordata</taxon>
        <taxon>Craniata</taxon>
        <taxon>Vertebrata</taxon>
        <taxon>Euteleostomi</taxon>
        <taxon>Amphibia</taxon>
        <taxon>Batrachia</taxon>
        <taxon>Anura</taxon>
        <taxon>Pipoidea</taxon>
        <taxon>Pipidae</taxon>
        <taxon>Xenopodinae</taxon>
        <taxon>Xenopus</taxon>
        <taxon>Xenopus</taxon>
    </lineage>
</organism>
<evidence type="ECO:0000250" key="1">
    <source>
        <dbReference type="UniProtKB" id="Q99732"/>
    </source>
</evidence>
<evidence type="ECO:0000250" key="2">
    <source>
        <dbReference type="UniProtKB" id="Q9H305"/>
    </source>
</evidence>
<evidence type="ECO:0000255" key="3">
    <source>
        <dbReference type="PROSITE-ProRule" id="PRU01181"/>
    </source>
</evidence>
<evidence type="ECO:0000256" key="4">
    <source>
        <dbReference type="SAM" id="MobiDB-lite"/>
    </source>
</evidence>
<evidence type="ECO:0000305" key="5"/>
<feature type="chain" id="PRO_0000280339" description="Cell death-inducing p53-target protein 1">
    <location>
        <begin position="1"/>
        <end position="207"/>
    </location>
</feature>
<feature type="domain" description="LITAF" evidence="3">
    <location>
        <begin position="121"/>
        <end position="205"/>
    </location>
</feature>
<feature type="region of interest" description="Disordered" evidence="4">
    <location>
        <begin position="1"/>
        <end position="54"/>
    </location>
</feature>
<feature type="region of interest" description="Membrane-binding amphipathic helix" evidence="5">
    <location>
        <begin position="161"/>
        <end position="183"/>
    </location>
</feature>
<feature type="compositionally biased region" description="Pro residues" evidence="4">
    <location>
        <begin position="1"/>
        <end position="13"/>
    </location>
</feature>
<feature type="compositionally biased region" description="Basic and acidic residues" evidence="4">
    <location>
        <begin position="18"/>
        <end position="31"/>
    </location>
</feature>
<feature type="binding site" evidence="1">
    <location>
        <position position="141"/>
    </location>
    <ligand>
        <name>Zn(2+)</name>
        <dbReference type="ChEBI" id="CHEBI:29105"/>
    </ligand>
</feature>
<feature type="binding site" evidence="1">
    <location>
        <position position="144"/>
    </location>
    <ligand>
        <name>Zn(2+)</name>
        <dbReference type="ChEBI" id="CHEBI:29105"/>
    </ligand>
</feature>
<feature type="binding site" evidence="1">
    <location>
        <position position="193"/>
    </location>
    <ligand>
        <name>Zn(2+)</name>
        <dbReference type="ChEBI" id="CHEBI:29105"/>
    </ligand>
</feature>
<feature type="binding site" evidence="1">
    <location>
        <position position="196"/>
    </location>
    <ligand>
        <name>Zn(2+)</name>
        <dbReference type="ChEBI" id="CHEBI:29105"/>
    </ligand>
</feature>
<protein>
    <recommendedName>
        <fullName>Cell death-inducing p53-target protein 1</fullName>
    </recommendedName>
    <alternativeName>
        <fullName>LITAF-like protein</fullName>
    </alternativeName>
</protein>
<reference key="1">
    <citation type="submission" date="2002-12" db="EMBL/GenBank/DDBJ databases">
        <authorList>
            <consortium name="NIH - Xenopus Gene Collection (XGC) project"/>
        </authorList>
    </citation>
    <scope>NUCLEOTIDE SEQUENCE [LARGE SCALE MRNA]</scope>
    <source>
        <tissue>Embryo</tissue>
    </source>
</reference>
<gene>
    <name type="primary">cdip1</name>
</gene>
<keyword id="KW-0053">Apoptosis</keyword>
<keyword id="KW-0967">Endosome</keyword>
<keyword id="KW-0458">Lysosome</keyword>
<keyword id="KW-0472">Membrane</keyword>
<keyword id="KW-0479">Metal-binding</keyword>
<keyword id="KW-1185">Reference proteome</keyword>
<keyword id="KW-0862">Zinc</keyword>
<dbReference type="EMBL" id="BC041237">
    <property type="protein sequence ID" value="AAH41237.1"/>
    <property type="molecule type" value="mRNA"/>
</dbReference>
<dbReference type="RefSeq" id="NP_001079379.1">
    <property type="nucleotide sequence ID" value="NM_001085910.1"/>
</dbReference>
<dbReference type="DNASU" id="379066"/>
<dbReference type="GeneID" id="379066"/>
<dbReference type="KEGG" id="xla:379066"/>
<dbReference type="AGR" id="Xenbase:XB-GENE-5752923"/>
<dbReference type="CTD" id="379066"/>
<dbReference type="Xenbase" id="XB-GENE-5752923">
    <property type="gene designation" value="cdip1.L"/>
</dbReference>
<dbReference type="OrthoDB" id="5599753at2759"/>
<dbReference type="Proteomes" id="UP000186698">
    <property type="component" value="Chromosome 9_10L"/>
</dbReference>
<dbReference type="Bgee" id="379066">
    <property type="expression patterns" value="Expressed in muscle tissue and 19 other cell types or tissues"/>
</dbReference>
<dbReference type="GO" id="GO:0098560">
    <property type="term" value="C:cytoplasmic side of late endosome membrane"/>
    <property type="evidence" value="ECO:0000250"/>
    <property type="project" value="UniProtKB"/>
</dbReference>
<dbReference type="GO" id="GO:0098574">
    <property type="term" value="C:cytoplasmic side of lysosomal membrane"/>
    <property type="evidence" value="ECO:0000250"/>
    <property type="project" value="UniProtKB"/>
</dbReference>
<dbReference type="GO" id="GO:0005634">
    <property type="term" value="C:nucleus"/>
    <property type="evidence" value="ECO:0000318"/>
    <property type="project" value="GO_Central"/>
</dbReference>
<dbReference type="GO" id="GO:0008270">
    <property type="term" value="F:zinc ion binding"/>
    <property type="evidence" value="ECO:0000318"/>
    <property type="project" value="GO_Central"/>
</dbReference>
<dbReference type="GO" id="GO:0042771">
    <property type="term" value="P:intrinsic apoptotic signaling pathway in response to DNA damage by p53 class mediator"/>
    <property type="evidence" value="ECO:0000318"/>
    <property type="project" value="GO_Central"/>
</dbReference>
<dbReference type="InterPro" id="IPR006629">
    <property type="entry name" value="LITAF"/>
</dbReference>
<dbReference type="InterPro" id="IPR037519">
    <property type="entry name" value="LITAF_fam"/>
</dbReference>
<dbReference type="PANTHER" id="PTHR23292:SF7">
    <property type="entry name" value="CELL DEATH-INDUCING P53-TARGET PROTEIN 1"/>
    <property type="match status" value="1"/>
</dbReference>
<dbReference type="PANTHER" id="PTHR23292">
    <property type="entry name" value="LIPOPOLYSACCHARIDE-INDUCED TUMOR NECROSIS FACTOR-ALPHA FACTOR"/>
    <property type="match status" value="1"/>
</dbReference>
<dbReference type="Pfam" id="PF10601">
    <property type="entry name" value="zf-LITAF-like"/>
    <property type="match status" value="1"/>
</dbReference>
<dbReference type="SMART" id="SM00714">
    <property type="entry name" value="LITAF"/>
    <property type="match status" value="1"/>
</dbReference>
<dbReference type="PROSITE" id="PS51837">
    <property type="entry name" value="LITAF"/>
    <property type="match status" value="1"/>
</dbReference>
<proteinExistence type="evidence at transcript level"/>
<name>CDIP1_XENLA</name>
<comment type="function">
    <text evidence="2">May act as a p53/TP53-apoptotic effector.</text>
</comment>
<comment type="subcellular location">
    <subcellularLocation>
        <location evidence="2">Late endosome membrane</location>
        <topology evidence="2">Peripheral membrane protein</topology>
        <orientation evidence="2">Cytoplasmic side</orientation>
    </subcellularLocation>
    <subcellularLocation>
        <location evidence="2">Lysosome membrane</location>
        <topology evidence="2">Peripheral membrane protein</topology>
        <orientation evidence="2">Cytoplasmic side</orientation>
    </subcellularLocation>
</comment>
<comment type="domain">
    <text evidence="1">The LITAF domain is stabilized by a bound zinc ion. The LITAF domain contains an amphipathic helix that mediates interaction with lipid membranes.</text>
</comment>
<comment type="similarity">
    <text evidence="5">Belongs to the CDIP1/LITAF family.</text>
</comment>